<sequence length="363" mass="43037">MLGMEKYFINEDWSPLKVFINRPDGFRVIEEISYKPATEWKGSIQGKYAVYLLRKRGIDHFTVISEISKILHSKIHYIGIKDTNAITEQIVYTTNVKNIIEKYENDKFLLTFLGYSNSKFNHTGNIFEIEIETDDIKEFEKRVNKLRSIKYLPAYIGYQRFGTKRPITHIIGKMLVLREWQNAIDFLVGYPFESESELVKKARYAYMKGDLKEALELFPKRFRDERIAIKLLLRNENYFNILRNLQTPLIFYIEAYQSYLFNKYLSRIMDPTKIDENLVIKIPTSYDSCDSICREIFREEGLLNINFKIKELKLNVKDLVRKAYTLIRNLTIKDKKITFALDRGIYATIVIREIARTDPRLFT</sequence>
<name>TRUD_SULTO</name>
<gene>
    <name evidence="1" type="primary">truD</name>
    <name type="ordered locus">STK_02070</name>
</gene>
<dbReference type="EC" id="5.4.99.27" evidence="1"/>
<dbReference type="EMBL" id="BA000023">
    <property type="protein sequence ID" value="BAK54192.1"/>
    <property type="molecule type" value="Genomic_DNA"/>
</dbReference>
<dbReference type="RefSeq" id="WP_010978148.1">
    <property type="nucleotide sequence ID" value="NC_003106.2"/>
</dbReference>
<dbReference type="SMR" id="Q976I1"/>
<dbReference type="STRING" id="273063.STK_02070"/>
<dbReference type="GeneID" id="1458096"/>
<dbReference type="KEGG" id="sto:STK_02070"/>
<dbReference type="PATRIC" id="fig|273063.9.peg.253"/>
<dbReference type="eggNOG" id="arCOG04252">
    <property type="taxonomic scope" value="Archaea"/>
</dbReference>
<dbReference type="OrthoDB" id="1798at2157"/>
<dbReference type="Proteomes" id="UP000001015">
    <property type="component" value="Chromosome"/>
</dbReference>
<dbReference type="GO" id="GO:0003723">
    <property type="term" value="F:RNA binding"/>
    <property type="evidence" value="ECO:0007669"/>
    <property type="project" value="InterPro"/>
</dbReference>
<dbReference type="GO" id="GO:0160150">
    <property type="term" value="F:tRNA pseudouridine(13) synthase activity"/>
    <property type="evidence" value="ECO:0007669"/>
    <property type="project" value="UniProtKB-EC"/>
</dbReference>
<dbReference type="GO" id="GO:0031119">
    <property type="term" value="P:tRNA pseudouridine synthesis"/>
    <property type="evidence" value="ECO:0007669"/>
    <property type="project" value="UniProtKB-UniRule"/>
</dbReference>
<dbReference type="Gene3D" id="1.10.1510.30">
    <property type="match status" value="1"/>
</dbReference>
<dbReference type="Gene3D" id="3.30.70.3160">
    <property type="match status" value="1"/>
</dbReference>
<dbReference type="Gene3D" id="3.30.2350.20">
    <property type="entry name" value="TruD, catalytic domain"/>
    <property type="match status" value="1"/>
</dbReference>
<dbReference type="HAMAP" id="MF_01082">
    <property type="entry name" value="TruD"/>
    <property type="match status" value="1"/>
</dbReference>
<dbReference type="InterPro" id="IPR020103">
    <property type="entry name" value="PsdUridine_synth_cat_dom_sf"/>
</dbReference>
<dbReference type="InterPro" id="IPR001656">
    <property type="entry name" value="PsdUridine_synth_TruD"/>
</dbReference>
<dbReference type="InterPro" id="IPR011760">
    <property type="entry name" value="PsdUridine_synth_TruD_insert"/>
</dbReference>
<dbReference type="InterPro" id="IPR042214">
    <property type="entry name" value="TruD_catalytic"/>
</dbReference>
<dbReference type="PANTHER" id="PTHR13326:SF21">
    <property type="entry name" value="PSEUDOURIDYLATE SYNTHASE PUS7L"/>
    <property type="match status" value="1"/>
</dbReference>
<dbReference type="PANTHER" id="PTHR13326">
    <property type="entry name" value="TRNA PSEUDOURIDINE SYNTHASE D"/>
    <property type="match status" value="1"/>
</dbReference>
<dbReference type="Pfam" id="PF01142">
    <property type="entry name" value="TruD"/>
    <property type="match status" value="2"/>
</dbReference>
<dbReference type="SUPFAM" id="SSF55120">
    <property type="entry name" value="Pseudouridine synthase"/>
    <property type="match status" value="1"/>
</dbReference>
<dbReference type="PROSITE" id="PS50984">
    <property type="entry name" value="TRUD"/>
    <property type="match status" value="1"/>
</dbReference>
<dbReference type="PROSITE" id="PS01268">
    <property type="entry name" value="UPF0024"/>
    <property type="match status" value="1"/>
</dbReference>
<evidence type="ECO:0000255" key="1">
    <source>
        <dbReference type="HAMAP-Rule" id="MF_01082"/>
    </source>
</evidence>
<comment type="function">
    <text evidence="1">Could be responsible for synthesis of pseudouridine from uracil-13 in transfer RNAs.</text>
</comment>
<comment type="catalytic activity">
    <reaction evidence="1">
        <text>uridine(13) in tRNA = pseudouridine(13) in tRNA</text>
        <dbReference type="Rhea" id="RHEA:42540"/>
        <dbReference type="Rhea" id="RHEA-COMP:10105"/>
        <dbReference type="Rhea" id="RHEA-COMP:10106"/>
        <dbReference type="ChEBI" id="CHEBI:65314"/>
        <dbReference type="ChEBI" id="CHEBI:65315"/>
        <dbReference type="EC" id="5.4.99.27"/>
    </reaction>
</comment>
<comment type="similarity">
    <text evidence="1">Belongs to the pseudouridine synthase TruD family.</text>
</comment>
<feature type="chain" id="PRO_0000152555" description="Probable tRNA pseudouridine synthase D">
    <location>
        <begin position="1"/>
        <end position="363"/>
    </location>
</feature>
<feature type="domain" description="TRUD" evidence="1">
    <location>
        <begin position="151"/>
        <end position="363"/>
    </location>
</feature>
<feature type="active site" description="Nucleophile" evidence="1">
    <location>
        <position position="82"/>
    </location>
</feature>
<protein>
    <recommendedName>
        <fullName evidence="1">Probable tRNA pseudouridine synthase D</fullName>
        <ecNumber evidence="1">5.4.99.27</ecNumber>
    </recommendedName>
    <alternativeName>
        <fullName evidence="1">tRNA pseudouridine(13) synthase</fullName>
    </alternativeName>
    <alternativeName>
        <fullName evidence="1">tRNA pseudouridylate synthase D</fullName>
    </alternativeName>
    <alternativeName>
        <fullName evidence="1">tRNA-uridine isomerase D</fullName>
    </alternativeName>
</protein>
<keyword id="KW-0413">Isomerase</keyword>
<keyword id="KW-1185">Reference proteome</keyword>
<keyword id="KW-0819">tRNA processing</keyword>
<proteinExistence type="inferred from homology"/>
<organism>
    <name type="scientific">Sulfurisphaera tokodaii (strain DSM 16993 / JCM 10545 / NBRC 100140 / 7)</name>
    <name type="common">Sulfolobus tokodaii</name>
    <dbReference type="NCBI Taxonomy" id="273063"/>
    <lineage>
        <taxon>Archaea</taxon>
        <taxon>Thermoproteota</taxon>
        <taxon>Thermoprotei</taxon>
        <taxon>Sulfolobales</taxon>
        <taxon>Sulfolobaceae</taxon>
        <taxon>Sulfurisphaera</taxon>
    </lineage>
</organism>
<reference key="1">
    <citation type="journal article" date="2001" name="DNA Res.">
        <title>Complete genome sequence of an aerobic thermoacidophilic Crenarchaeon, Sulfolobus tokodaii strain7.</title>
        <authorList>
            <person name="Kawarabayasi Y."/>
            <person name="Hino Y."/>
            <person name="Horikawa H."/>
            <person name="Jin-no K."/>
            <person name="Takahashi M."/>
            <person name="Sekine M."/>
            <person name="Baba S."/>
            <person name="Ankai A."/>
            <person name="Kosugi H."/>
            <person name="Hosoyama A."/>
            <person name="Fukui S."/>
            <person name="Nagai Y."/>
            <person name="Nishijima K."/>
            <person name="Otsuka R."/>
            <person name="Nakazawa H."/>
            <person name="Takamiya M."/>
            <person name="Kato Y."/>
            <person name="Yoshizawa T."/>
            <person name="Tanaka T."/>
            <person name="Kudoh Y."/>
            <person name="Yamazaki J."/>
            <person name="Kushida N."/>
            <person name="Oguchi A."/>
            <person name="Aoki K."/>
            <person name="Masuda S."/>
            <person name="Yanagii M."/>
            <person name="Nishimura M."/>
            <person name="Yamagishi A."/>
            <person name="Oshima T."/>
            <person name="Kikuchi H."/>
        </authorList>
    </citation>
    <scope>NUCLEOTIDE SEQUENCE [LARGE SCALE GENOMIC DNA]</scope>
    <source>
        <strain>DSM 16993 / JCM 10545 / NBRC 100140 / 7</strain>
    </source>
</reference>
<accession>Q976I1</accession>
<accession>F9VMP6</accession>